<accession>Q8UE18</accession>
<evidence type="ECO:0000255" key="1">
    <source>
        <dbReference type="HAMAP-Rule" id="MF_01325"/>
    </source>
</evidence>
<evidence type="ECO:0000256" key="2">
    <source>
        <dbReference type="SAM" id="MobiDB-lite"/>
    </source>
</evidence>
<evidence type="ECO:0000305" key="3"/>
<organism>
    <name type="scientific">Agrobacterium fabrum (strain C58 / ATCC 33970)</name>
    <name type="common">Agrobacterium tumefaciens (strain C58)</name>
    <dbReference type="NCBI Taxonomy" id="176299"/>
    <lineage>
        <taxon>Bacteria</taxon>
        <taxon>Pseudomonadati</taxon>
        <taxon>Pseudomonadota</taxon>
        <taxon>Alphaproteobacteria</taxon>
        <taxon>Hyphomicrobiales</taxon>
        <taxon>Rhizobiaceae</taxon>
        <taxon>Rhizobium/Agrobacterium group</taxon>
        <taxon>Agrobacterium</taxon>
        <taxon>Agrobacterium tumefaciens complex</taxon>
    </lineage>
</organism>
<protein>
    <recommendedName>
        <fullName evidence="1">Large ribosomal subunit protein uL3</fullName>
    </recommendedName>
    <alternativeName>
        <fullName evidence="3">50S ribosomal protein L3</fullName>
    </alternativeName>
</protein>
<comment type="function">
    <text evidence="1">One of the primary rRNA binding proteins, it binds directly near the 3'-end of the 23S rRNA, where it nucleates assembly of the 50S subunit.</text>
</comment>
<comment type="subunit">
    <text evidence="1">Part of the 50S ribosomal subunit. Forms a cluster with proteins L14 and L19.</text>
</comment>
<comment type="PTM">
    <text evidence="1">Methylated by PrmB.</text>
</comment>
<comment type="similarity">
    <text evidence="1">Belongs to the universal ribosomal protein uL3 family.</text>
</comment>
<name>RL3_AGRFC</name>
<proteinExistence type="inferred from homology"/>
<reference key="1">
    <citation type="journal article" date="2001" name="Science">
        <title>The genome of the natural genetic engineer Agrobacterium tumefaciens C58.</title>
        <authorList>
            <person name="Wood D.W."/>
            <person name="Setubal J.C."/>
            <person name="Kaul R."/>
            <person name="Monks D.E."/>
            <person name="Kitajima J.P."/>
            <person name="Okura V.K."/>
            <person name="Zhou Y."/>
            <person name="Chen L."/>
            <person name="Wood G.E."/>
            <person name="Almeida N.F. Jr."/>
            <person name="Woo L."/>
            <person name="Chen Y."/>
            <person name="Paulsen I.T."/>
            <person name="Eisen J.A."/>
            <person name="Karp P.D."/>
            <person name="Bovee D. Sr."/>
            <person name="Chapman P."/>
            <person name="Clendenning J."/>
            <person name="Deatherage G."/>
            <person name="Gillet W."/>
            <person name="Grant C."/>
            <person name="Kutyavin T."/>
            <person name="Levy R."/>
            <person name="Li M.-J."/>
            <person name="McClelland E."/>
            <person name="Palmieri A."/>
            <person name="Raymond C."/>
            <person name="Rouse G."/>
            <person name="Saenphimmachak C."/>
            <person name="Wu Z."/>
            <person name="Romero P."/>
            <person name="Gordon D."/>
            <person name="Zhang S."/>
            <person name="Yoo H."/>
            <person name="Tao Y."/>
            <person name="Biddle P."/>
            <person name="Jung M."/>
            <person name="Krespan W."/>
            <person name="Perry M."/>
            <person name="Gordon-Kamm B."/>
            <person name="Liao L."/>
            <person name="Kim S."/>
            <person name="Hendrick C."/>
            <person name="Zhao Z.-Y."/>
            <person name="Dolan M."/>
            <person name="Chumley F."/>
            <person name="Tingey S.V."/>
            <person name="Tomb J.-F."/>
            <person name="Gordon M.P."/>
            <person name="Olson M.V."/>
            <person name="Nester E.W."/>
        </authorList>
    </citation>
    <scope>NUCLEOTIDE SEQUENCE [LARGE SCALE GENOMIC DNA]</scope>
    <source>
        <strain>C58 / ATCC 33970</strain>
    </source>
</reference>
<reference key="2">
    <citation type="journal article" date="2001" name="Science">
        <title>Genome sequence of the plant pathogen and biotechnology agent Agrobacterium tumefaciens C58.</title>
        <authorList>
            <person name="Goodner B."/>
            <person name="Hinkle G."/>
            <person name="Gattung S."/>
            <person name="Miller N."/>
            <person name="Blanchard M."/>
            <person name="Qurollo B."/>
            <person name="Goldman B.S."/>
            <person name="Cao Y."/>
            <person name="Askenazi M."/>
            <person name="Halling C."/>
            <person name="Mullin L."/>
            <person name="Houmiel K."/>
            <person name="Gordon J."/>
            <person name="Vaudin M."/>
            <person name="Iartchouk O."/>
            <person name="Epp A."/>
            <person name="Liu F."/>
            <person name="Wollam C."/>
            <person name="Allinger M."/>
            <person name="Doughty D."/>
            <person name="Scott C."/>
            <person name="Lappas C."/>
            <person name="Markelz B."/>
            <person name="Flanagan C."/>
            <person name="Crowell C."/>
            <person name="Gurson J."/>
            <person name="Lomo C."/>
            <person name="Sear C."/>
            <person name="Strub G."/>
            <person name="Cielo C."/>
            <person name="Slater S."/>
        </authorList>
    </citation>
    <scope>NUCLEOTIDE SEQUENCE [LARGE SCALE GENOMIC DNA]</scope>
    <source>
        <strain>C58 / ATCC 33970</strain>
    </source>
</reference>
<dbReference type="EMBL" id="AE007869">
    <property type="protein sequence ID" value="AAK87708.1"/>
    <property type="molecule type" value="Genomic_DNA"/>
</dbReference>
<dbReference type="PIR" id="AH2815">
    <property type="entry name" value="AH2815"/>
</dbReference>
<dbReference type="PIR" id="C97594">
    <property type="entry name" value="C97594"/>
</dbReference>
<dbReference type="RefSeq" id="NP_354923.1">
    <property type="nucleotide sequence ID" value="NC_003062.2"/>
</dbReference>
<dbReference type="RefSeq" id="WP_003507769.1">
    <property type="nucleotide sequence ID" value="NC_003062.2"/>
</dbReference>
<dbReference type="SMR" id="Q8UE18"/>
<dbReference type="STRING" id="176299.Atu1946"/>
<dbReference type="EnsemblBacteria" id="AAK87708">
    <property type="protein sequence ID" value="AAK87708"/>
    <property type="gene ID" value="Atu1946"/>
</dbReference>
<dbReference type="GeneID" id="97364693"/>
<dbReference type="KEGG" id="atu:Atu1946"/>
<dbReference type="PATRIC" id="fig|176299.10.peg.1958"/>
<dbReference type="eggNOG" id="COG0087">
    <property type="taxonomic scope" value="Bacteria"/>
</dbReference>
<dbReference type="HOGENOM" id="CLU_044142_2_0_5"/>
<dbReference type="OrthoDB" id="9806135at2"/>
<dbReference type="PhylomeDB" id="Q8UE18"/>
<dbReference type="BioCyc" id="AGRO:ATU1946-MONOMER"/>
<dbReference type="Proteomes" id="UP000000813">
    <property type="component" value="Chromosome circular"/>
</dbReference>
<dbReference type="GO" id="GO:0022625">
    <property type="term" value="C:cytosolic large ribosomal subunit"/>
    <property type="evidence" value="ECO:0007669"/>
    <property type="project" value="TreeGrafter"/>
</dbReference>
<dbReference type="GO" id="GO:0019843">
    <property type="term" value="F:rRNA binding"/>
    <property type="evidence" value="ECO:0007669"/>
    <property type="project" value="UniProtKB-UniRule"/>
</dbReference>
<dbReference type="GO" id="GO:0003735">
    <property type="term" value="F:structural constituent of ribosome"/>
    <property type="evidence" value="ECO:0007669"/>
    <property type="project" value="InterPro"/>
</dbReference>
<dbReference type="GO" id="GO:0006412">
    <property type="term" value="P:translation"/>
    <property type="evidence" value="ECO:0007669"/>
    <property type="project" value="UniProtKB-UniRule"/>
</dbReference>
<dbReference type="FunFam" id="2.40.30.10:FF:000004">
    <property type="entry name" value="50S ribosomal protein L3"/>
    <property type="match status" value="1"/>
</dbReference>
<dbReference type="FunFam" id="3.30.160.810:FF:000001">
    <property type="entry name" value="50S ribosomal protein L3"/>
    <property type="match status" value="1"/>
</dbReference>
<dbReference type="Gene3D" id="3.30.160.810">
    <property type="match status" value="1"/>
</dbReference>
<dbReference type="Gene3D" id="2.40.30.10">
    <property type="entry name" value="Translation factors"/>
    <property type="match status" value="1"/>
</dbReference>
<dbReference type="HAMAP" id="MF_01325_B">
    <property type="entry name" value="Ribosomal_uL3_B"/>
    <property type="match status" value="1"/>
</dbReference>
<dbReference type="InterPro" id="IPR000597">
    <property type="entry name" value="Ribosomal_uL3"/>
</dbReference>
<dbReference type="InterPro" id="IPR019927">
    <property type="entry name" value="Ribosomal_uL3_bac/org-type"/>
</dbReference>
<dbReference type="InterPro" id="IPR019926">
    <property type="entry name" value="Ribosomal_uL3_CS"/>
</dbReference>
<dbReference type="InterPro" id="IPR009000">
    <property type="entry name" value="Transl_B-barrel_sf"/>
</dbReference>
<dbReference type="NCBIfam" id="TIGR03625">
    <property type="entry name" value="L3_bact"/>
    <property type="match status" value="1"/>
</dbReference>
<dbReference type="PANTHER" id="PTHR11229">
    <property type="entry name" value="50S RIBOSOMAL PROTEIN L3"/>
    <property type="match status" value="1"/>
</dbReference>
<dbReference type="PANTHER" id="PTHR11229:SF16">
    <property type="entry name" value="LARGE RIBOSOMAL SUBUNIT PROTEIN UL3C"/>
    <property type="match status" value="1"/>
</dbReference>
<dbReference type="Pfam" id="PF00297">
    <property type="entry name" value="Ribosomal_L3"/>
    <property type="match status" value="1"/>
</dbReference>
<dbReference type="SUPFAM" id="SSF50447">
    <property type="entry name" value="Translation proteins"/>
    <property type="match status" value="1"/>
</dbReference>
<dbReference type="PROSITE" id="PS00474">
    <property type="entry name" value="RIBOSOMAL_L3"/>
    <property type="match status" value="1"/>
</dbReference>
<keyword id="KW-0488">Methylation</keyword>
<keyword id="KW-1185">Reference proteome</keyword>
<keyword id="KW-0687">Ribonucleoprotein</keyword>
<keyword id="KW-0689">Ribosomal protein</keyword>
<keyword id="KW-0694">RNA-binding</keyword>
<keyword id="KW-0699">rRNA-binding</keyword>
<feature type="chain" id="PRO_0000077058" description="Large ribosomal subunit protein uL3">
    <location>
        <begin position="1"/>
        <end position="213"/>
    </location>
</feature>
<feature type="region of interest" description="Disordered" evidence="2">
    <location>
        <begin position="131"/>
        <end position="155"/>
    </location>
</feature>
<feature type="compositionally biased region" description="Polar residues" evidence="2">
    <location>
        <begin position="135"/>
        <end position="152"/>
    </location>
</feature>
<feature type="modified residue" description="N5-methylglutamine" evidence="1">
    <location>
        <position position="151"/>
    </location>
</feature>
<gene>
    <name evidence="1" type="primary">rplC</name>
    <name type="ordered locus">Atu1946</name>
    <name type="ORF">AGR_C_3555</name>
</gene>
<sequence>MRSGVIAQKVGMTRVYNDAGEHIPVTVLRLDNVQVVAQRTEDKNGYTAVQLGAGQSKVKNTTKALRGHFAAANVEPKAKLVEFRVSPENLIDIGATLTANHFQSGQLVDVTGTTIGKGFAGAMKRHNFGGGRASHGNSVSHRAHGSTGNNQDPGRVWKGKRMAGHMGQTRVTTQNLEVVSTDEDRGLILVKGAVPGSKGSWIIVRDAVKSAAK</sequence>